<dbReference type="EC" id="4.6.1.12" evidence="1"/>
<dbReference type="EMBL" id="CP000661">
    <property type="protein sequence ID" value="ABP70378.1"/>
    <property type="molecule type" value="Genomic_DNA"/>
</dbReference>
<dbReference type="SMR" id="A4WSL4"/>
<dbReference type="STRING" id="349102.Rsph17025_1484"/>
<dbReference type="KEGG" id="rsq:Rsph17025_1484"/>
<dbReference type="eggNOG" id="COG0245">
    <property type="taxonomic scope" value="Bacteria"/>
</dbReference>
<dbReference type="HOGENOM" id="CLU_084630_2_0_5"/>
<dbReference type="BioCyc" id="RSPH349102:G1G8M-1526-MONOMER"/>
<dbReference type="UniPathway" id="UPA00056">
    <property type="reaction ID" value="UER00095"/>
</dbReference>
<dbReference type="GO" id="GO:0008685">
    <property type="term" value="F:2-C-methyl-D-erythritol 2,4-cyclodiphosphate synthase activity"/>
    <property type="evidence" value="ECO:0007669"/>
    <property type="project" value="UniProtKB-UniRule"/>
</dbReference>
<dbReference type="GO" id="GO:0046872">
    <property type="term" value="F:metal ion binding"/>
    <property type="evidence" value="ECO:0007669"/>
    <property type="project" value="UniProtKB-KW"/>
</dbReference>
<dbReference type="GO" id="GO:0019288">
    <property type="term" value="P:isopentenyl diphosphate biosynthetic process, methylerythritol 4-phosphate pathway"/>
    <property type="evidence" value="ECO:0007669"/>
    <property type="project" value="UniProtKB-UniRule"/>
</dbReference>
<dbReference type="GO" id="GO:0016114">
    <property type="term" value="P:terpenoid biosynthetic process"/>
    <property type="evidence" value="ECO:0007669"/>
    <property type="project" value="InterPro"/>
</dbReference>
<dbReference type="CDD" id="cd00554">
    <property type="entry name" value="MECDP_synthase"/>
    <property type="match status" value="1"/>
</dbReference>
<dbReference type="Gene3D" id="3.30.1330.50">
    <property type="entry name" value="2-C-methyl-D-erythritol 2,4-cyclodiphosphate synthase"/>
    <property type="match status" value="1"/>
</dbReference>
<dbReference type="HAMAP" id="MF_00107">
    <property type="entry name" value="IspF"/>
    <property type="match status" value="1"/>
</dbReference>
<dbReference type="InterPro" id="IPR003526">
    <property type="entry name" value="MECDP_synthase"/>
</dbReference>
<dbReference type="InterPro" id="IPR020555">
    <property type="entry name" value="MECDP_synthase_CS"/>
</dbReference>
<dbReference type="InterPro" id="IPR036571">
    <property type="entry name" value="MECDP_synthase_sf"/>
</dbReference>
<dbReference type="NCBIfam" id="TIGR00151">
    <property type="entry name" value="ispF"/>
    <property type="match status" value="1"/>
</dbReference>
<dbReference type="PANTHER" id="PTHR43181">
    <property type="entry name" value="2-C-METHYL-D-ERYTHRITOL 2,4-CYCLODIPHOSPHATE SYNTHASE, CHLOROPLASTIC"/>
    <property type="match status" value="1"/>
</dbReference>
<dbReference type="PANTHER" id="PTHR43181:SF1">
    <property type="entry name" value="2-C-METHYL-D-ERYTHRITOL 2,4-CYCLODIPHOSPHATE SYNTHASE, CHLOROPLASTIC"/>
    <property type="match status" value="1"/>
</dbReference>
<dbReference type="Pfam" id="PF02542">
    <property type="entry name" value="YgbB"/>
    <property type="match status" value="1"/>
</dbReference>
<dbReference type="SUPFAM" id="SSF69765">
    <property type="entry name" value="IpsF-like"/>
    <property type="match status" value="1"/>
</dbReference>
<dbReference type="PROSITE" id="PS01350">
    <property type="entry name" value="ISPF"/>
    <property type="match status" value="1"/>
</dbReference>
<proteinExistence type="inferred from homology"/>
<name>ISPF_CERS5</name>
<organism>
    <name type="scientific">Cereibacter sphaeroides (strain ATCC 17025 / ATH 2.4.3)</name>
    <name type="common">Rhodobacter sphaeroides</name>
    <dbReference type="NCBI Taxonomy" id="349102"/>
    <lineage>
        <taxon>Bacteria</taxon>
        <taxon>Pseudomonadati</taxon>
        <taxon>Pseudomonadota</taxon>
        <taxon>Alphaproteobacteria</taxon>
        <taxon>Rhodobacterales</taxon>
        <taxon>Paracoccaceae</taxon>
        <taxon>Cereibacter</taxon>
    </lineage>
</organism>
<feature type="chain" id="PRO_1000022870" description="2-C-methyl-D-erythritol 2,4-cyclodiphosphate synthase">
    <location>
        <begin position="1"/>
        <end position="159"/>
    </location>
</feature>
<feature type="binding site" evidence="1">
    <location>
        <begin position="10"/>
        <end position="12"/>
    </location>
    <ligand>
        <name>4-CDP-2-C-methyl-D-erythritol 2-phosphate</name>
        <dbReference type="ChEBI" id="CHEBI:57919"/>
    </ligand>
</feature>
<feature type="binding site" evidence="1">
    <location>
        <position position="10"/>
    </location>
    <ligand>
        <name>a divalent metal cation</name>
        <dbReference type="ChEBI" id="CHEBI:60240"/>
    </ligand>
</feature>
<feature type="binding site" evidence="1">
    <location>
        <position position="12"/>
    </location>
    <ligand>
        <name>a divalent metal cation</name>
        <dbReference type="ChEBI" id="CHEBI:60240"/>
    </ligand>
</feature>
<feature type="binding site" evidence="1">
    <location>
        <begin position="36"/>
        <end position="37"/>
    </location>
    <ligand>
        <name>4-CDP-2-C-methyl-D-erythritol 2-phosphate</name>
        <dbReference type="ChEBI" id="CHEBI:57919"/>
    </ligand>
</feature>
<feature type="binding site" evidence="1">
    <location>
        <position position="44"/>
    </location>
    <ligand>
        <name>a divalent metal cation</name>
        <dbReference type="ChEBI" id="CHEBI:60240"/>
    </ligand>
</feature>
<feature type="binding site" evidence="1">
    <location>
        <begin position="58"/>
        <end position="60"/>
    </location>
    <ligand>
        <name>4-CDP-2-C-methyl-D-erythritol 2-phosphate</name>
        <dbReference type="ChEBI" id="CHEBI:57919"/>
    </ligand>
</feature>
<feature type="binding site" evidence="1">
    <location>
        <begin position="134"/>
        <end position="137"/>
    </location>
    <ligand>
        <name>4-CDP-2-C-methyl-D-erythritol 2-phosphate</name>
        <dbReference type="ChEBI" id="CHEBI:57919"/>
    </ligand>
</feature>
<feature type="binding site" evidence="1">
    <location>
        <position position="141"/>
    </location>
    <ligand>
        <name>4-CDP-2-C-methyl-D-erythritol 2-phosphate</name>
        <dbReference type="ChEBI" id="CHEBI:57919"/>
    </ligand>
</feature>
<feature type="binding site" evidence="1">
    <location>
        <position position="144"/>
    </location>
    <ligand>
        <name>4-CDP-2-C-methyl-D-erythritol 2-phosphate</name>
        <dbReference type="ChEBI" id="CHEBI:57919"/>
    </ligand>
</feature>
<feature type="site" description="Transition state stabilizer" evidence="1">
    <location>
        <position position="36"/>
    </location>
</feature>
<feature type="site" description="Transition state stabilizer" evidence="1">
    <location>
        <position position="135"/>
    </location>
</feature>
<accession>A4WSL4</accession>
<protein>
    <recommendedName>
        <fullName evidence="1">2-C-methyl-D-erythritol 2,4-cyclodiphosphate synthase</fullName>
        <shortName evidence="1">MECDP-synthase</shortName>
        <shortName evidence="1">MECPP-synthase</shortName>
        <shortName evidence="1">MECPS</shortName>
        <ecNumber evidence="1">4.6.1.12</ecNumber>
    </recommendedName>
</protein>
<reference key="1">
    <citation type="submission" date="2007-04" db="EMBL/GenBank/DDBJ databases">
        <title>Complete sequence of chromosome of Rhodobacter sphaeroides ATCC 17025.</title>
        <authorList>
            <consortium name="US DOE Joint Genome Institute"/>
            <person name="Copeland A."/>
            <person name="Lucas S."/>
            <person name="Lapidus A."/>
            <person name="Barry K."/>
            <person name="Detter J.C."/>
            <person name="Glavina del Rio T."/>
            <person name="Hammon N."/>
            <person name="Israni S."/>
            <person name="Dalin E."/>
            <person name="Tice H."/>
            <person name="Pitluck S."/>
            <person name="Chertkov O."/>
            <person name="Brettin T."/>
            <person name="Bruce D."/>
            <person name="Han C."/>
            <person name="Schmutz J."/>
            <person name="Larimer F."/>
            <person name="Land M."/>
            <person name="Hauser L."/>
            <person name="Kyrpides N."/>
            <person name="Kim E."/>
            <person name="Richardson P."/>
            <person name="Mackenzie C."/>
            <person name="Choudhary M."/>
            <person name="Donohue T.J."/>
            <person name="Kaplan S."/>
        </authorList>
    </citation>
    <scope>NUCLEOTIDE SEQUENCE [LARGE SCALE GENOMIC DNA]</scope>
    <source>
        <strain>ATCC 17025 / ATH 2.4.3</strain>
    </source>
</reference>
<gene>
    <name evidence="1" type="primary">ispF</name>
    <name type="ordered locus">Rsph17025_1484</name>
</gene>
<keyword id="KW-0414">Isoprene biosynthesis</keyword>
<keyword id="KW-0456">Lyase</keyword>
<keyword id="KW-0479">Metal-binding</keyword>
<comment type="function">
    <text evidence="1">Involved in the biosynthesis of isopentenyl diphosphate (IPP) and dimethylallyl diphosphate (DMAPP), two major building blocks of isoprenoid compounds. Catalyzes the conversion of 4-diphosphocytidyl-2-C-methyl-D-erythritol 2-phosphate (CDP-ME2P) to 2-C-methyl-D-erythritol 2,4-cyclodiphosphate (ME-CPP) with a corresponding release of cytidine 5-monophosphate (CMP).</text>
</comment>
<comment type="catalytic activity">
    <reaction evidence="1">
        <text>4-CDP-2-C-methyl-D-erythritol 2-phosphate = 2-C-methyl-D-erythritol 2,4-cyclic diphosphate + CMP</text>
        <dbReference type="Rhea" id="RHEA:23864"/>
        <dbReference type="ChEBI" id="CHEBI:57919"/>
        <dbReference type="ChEBI" id="CHEBI:58483"/>
        <dbReference type="ChEBI" id="CHEBI:60377"/>
        <dbReference type="EC" id="4.6.1.12"/>
    </reaction>
</comment>
<comment type="cofactor">
    <cofactor evidence="1">
        <name>a divalent metal cation</name>
        <dbReference type="ChEBI" id="CHEBI:60240"/>
    </cofactor>
    <text evidence="1">Binds 1 divalent metal cation per subunit.</text>
</comment>
<comment type="pathway">
    <text evidence="1">Isoprenoid biosynthesis; isopentenyl diphosphate biosynthesis via DXP pathway; isopentenyl diphosphate from 1-deoxy-D-xylulose 5-phosphate: step 4/6.</text>
</comment>
<comment type="subunit">
    <text evidence="1">Homotrimer.</text>
</comment>
<comment type="similarity">
    <text evidence="1">Belongs to the IspF family.</text>
</comment>
<evidence type="ECO:0000255" key="1">
    <source>
        <dbReference type="HAMAP-Rule" id="MF_00107"/>
    </source>
</evidence>
<sequence length="159" mass="16782">MDIRTGNGFDVHAFGPGDHVWLCGVRVPHHRGLIGHSDADVGMHALTDAIYGALAEGDIGVHFPPSDPQWKGAASRIFLEHAMGRIAARGFTLANCDVTLICERPKIGPMAPAMREALAAIMGVEVGRISVKATTSEKLGFTGREEGIACIATATLLQA</sequence>